<proteinExistence type="inferred from homology"/>
<reference key="1">
    <citation type="journal article" date="2004" name="Proc. Natl. Acad. Sci. U.S.A.">
        <title>Genomic analysis of Bacteroides fragilis reveals extensive DNA inversions regulating cell surface adaptation.</title>
        <authorList>
            <person name="Kuwahara T."/>
            <person name="Yamashita A."/>
            <person name="Hirakawa H."/>
            <person name="Nakayama H."/>
            <person name="Toh H."/>
            <person name="Okada N."/>
            <person name="Kuhara S."/>
            <person name="Hattori M."/>
            <person name="Hayashi T."/>
            <person name="Ohnishi Y."/>
        </authorList>
    </citation>
    <scope>NUCLEOTIDE SEQUENCE [LARGE SCALE GENOMIC DNA]</scope>
    <source>
        <strain>YCH46</strain>
    </source>
</reference>
<comment type="function">
    <text evidence="1">One of the essential components for the initiation of protein synthesis. Stabilizes the binding of IF-2 and IF-3 on the 30S subunit to which N-formylmethionyl-tRNA(fMet) subsequently binds. Helps modulate mRNA selection, yielding the 30S pre-initiation complex (PIC). Upon addition of the 50S ribosomal subunit IF-1, IF-2 and IF-3 are released leaving the mature 70S translation initiation complex.</text>
</comment>
<comment type="subunit">
    <text evidence="1">Component of the 30S ribosomal translation pre-initiation complex which assembles on the 30S ribosome in the order IF-2 and IF-3, IF-1 and N-formylmethionyl-tRNA(fMet); mRNA recruitment can occur at any time during PIC assembly.</text>
</comment>
<comment type="subcellular location">
    <subcellularLocation>
        <location evidence="1">Cytoplasm</location>
    </subcellularLocation>
</comment>
<comment type="similarity">
    <text evidence="1">Belongs to the IF-1 family.</text>
</comment>
<organism>
    <name type="scientific">Bacteroides fragilis (strain YCH46)</name>
    <dbReference type="NCBI Taxonomy" id="295405"/>
    <lineage>
        <taxon>Bacteria</taxon>
        <taxon>Pseudomonadati</taxon>
        <taxon>Bacteroidota</taxon>
        <taxon>Bacteroidia</taxon>
        <taxon>Bacteroidales</taxon>
        <taxon>Bacteroidaceae</taxon>
        <taxon>Bacteroides</taxon>
    </lineage>
</organism>
<protein>
    <recommendedName>
        <fullName evidence="1">Translation initiation factor IF-1</fullName>
    </recommendedName>
</protein>
<gene>
    <name evidence="1" type="primary">infA</name>
    <name type="ordered locus">BF4159</name>
</gene>
<evidence type="ECO:0000255" key="1">
    <source>
        <dbReference type="HAMAP-Rule" id="MF_00075"/>
    </source>
</evidence>
<name>IF1_BACFR</name>
<accession>Q64NN0</accession>
<sequence>MAKQSAIEQDGVIVEALSNAMFRVELENGHEITAHISGKMRMHYIKILPGDKVRVEMSPYDLSKGRIVFRYK</sequence>
<dbReference type="EMBL" id="AP006841">
    <property type="protein sequence ID" value="BAD50902.1"/>
    <property type="molecule type" value="Genomic_DNA"/>
</dbReference>
<dbReference type="RefSeq" id="WP_002558052.1">
    <property type="nucleotide sequence ID" value="NZ_UYXF01000007.1"/>
</dbReference>
<dbReference type="RefSeq" id="YP_101436.1">
    <property type="nucleotide sequence ID" value="NC_006347.1"/>
</dbReference>
<dbReference type="SMR" id="Q64NN0"/>
<dbReference type="STRING" id="295405.BF4159"/>
<dbReference type="GeneID" id="9711838"/>
<dbReference type="KEGG" id="bfr:BF4159"/>
<dbReference type="PATRIC" id="fig|295405.11.peg.4013"/>
<dbReference type="HOGENOM" id="CLU_151267_1_0_10"/>
<dbReference type="OrthoDB" id="9803250at2"/>
<dbReference type="PRO" id="PR:Q64NN0"/>
<dbReference type="Proteomes" id="UP000002197">
    <property type="component" value="Chromosome"/>
</dbReference>
<dbReference type="GO" id="GO:0005829">
    <property type="term" value="C:cytosol"/>
    <property type="evidence" value="ECO:0007669"/>
    <property type="project" value="TreeGrafter"/>
</dbReference>
<dbReference type="GO" id="GO:0043022">
    <property type="term" value="F:ribosome binding"/>
    <property type="evidence" value="ECO:0007669"/>
    <property type="project" value="UniProtKB-UniRule"/>
</dbReference>
<dbReference type="GO" id="GO:0019843">
    <property type="term" value="F:rRNA binding"/>
    <property type="evidence" value="ECO:0007669"/>
    <property type="project" value="UniProtKB-UniRule"/>
</dbReference>
<dbReference type="GO" id="GO:0003743">
    <property type="term" value="F:translation initiation factor activity"/>
    <property type="evidence" value="ECO:0007669"/>
    <property type="project" value="UniProtKB-UniRule"/>
</dbReference>
<dbReference type="CDD" id="cd04451">
    <property type="entry name" value="S1_IF1"/>
    <property type="match status" value="1"/>
</dbReference>
<dbReference type="FunFam" id="2.40.50.140:FF:000002">
    <property type="entry name" value="Translation initiation factor IF-1"/>
    <property type="match status" value="1"/>
</dbReference>
<dbReference type="Gene3D" id="2.40.50.140">
    <property type="entry name" value="Nucleic acid-binding proteins"/>
    <property type="match status" value="1"/>
</dbReference>
<dbReference type="HAMAP" id="MF_00075">
    <property type="entry name" value="IF_1"/>
    <property type="match status" value="1"/>
</dbReference>
<dbReference type="InterPro" id="IPR012340">
    <property type="entry name" value="NA-bd_OB-fold"/>
</dbReference>
<dbReference type="InterPro" id="IPR006196">
    <property type="entry name" value="RNA-binding_domain_S1_IF1"/>
</dbReference>
<dbReference type="InterPro" id="IPR003029">
    <property type="entry name" value="S1_domain"/>
</dbReference>
<dbReference type="InterPro" id="IPR004368">
    <property type="entry name" value="TIF_IF1"/>
</dbReference>
<dbReference type="NCBIfam" id="TIGR00008">
    <property type="entry name" value="infA"/>
    <property type="match status" value="1"/>
</dbReference>
<dbReference type="PANTHER" id="PTHR33370">
    <property type="entry name" value="TRANSLATION INITIATION FACTOR IF-1, CHLOROPLASTIC"/>
    <property type="match status" value="1"/>
</dbReference>
<dbReference type="PANTHER" id="PTHR33370:SF1">
    <property type="entry name" value="TRANSLATION INITIATION FACTOR IF-1, CHLOROPLASTIC"/>
    <property type="match status" value="1"/>
</dbReference>
<dbReference type="Pfam" id="PF01176">
    <property type="entry name" value="eIF-1a"/>
    <property type="match status" value="1"/>
</dbReference>
<dbReference type="SMART" id="SM00316">
    <property type="entry name" value="S1"/>
    <property type="match status" value="1"/>
</dbReference>
<dbReference type="SUPFAM" id="SSF50249">
    <property type="entry name" value="Nucleic acid-binding proteins"/>
    <property type="match status" value="1"/>
</dbReference>
<dbReference type="PROSITE" id="PS50832">
    <property type="entry name" value="S1_IF1_TYPE"/>
    <property type="match status" value="1"/>
</dbReference>
<keyword id="KW-0963">Cytoplasm</keyword>
<keyword id="KW-0396">Initiation factor</keyword>
<keyword id="KW-0648">Protein biosynthesis</keyword>
<keyword id="KW-0694">RNA-binding</keyword>
<keyword id="KW-0699">rRNA-binding</keyword>
<feature type="chain" id="PRO_0000095733" description="Translation initiation factor IF-1">
    <location>
        <begin position="1"/>
        <end position="72"/>
    </location>
</feature>
<feature type="domain" description="S1-like" evidence="1">
    <location>
        <begin position="1"/>
        <end position="72"/>
    </location>
</feature>